<feature type="chain" id="PRO_0000047438" description="Zinc finger protein 169">
    <location>
        <begin position="1"/>
        <end position="603"/>
    </location>
</feature>
<feature type="domain" description="KRAB" evidence="2">
    <location>
        <begin position="14"/>
        <end position="85"/>
    </location>
</feature>
<feature type="zinc finger region" description="C2H2-type 1" evidence="1">
    <location>
        <begin position="234"/>
        <end position="256"/>
    </location>
</feature>
<feature type="zinc finger region" description="C2H2-type 2" evidence="1">
    <location>
        <begin position="262"/>
        <end position="284"/>
    </location>
</feature>
<feature type="zinc finger region" description="C2H2-type 3" evidence="1">
    <location>
        <begin position="290"/>
        <end position="312"/>
    </location>
</feature>
<feature type="zinc finger region" description="C2H2-type 4" evidence="1">
    <location>
        <begin position="318"/>
        <end position="340"/>
    </location>
</feature>
<feature type="zinc finger region" description="C2H2-type 5" evidence="1">
    <location>
        <begin position="346"/>
        <end position="368"/>
    </location>
</feature>
<feature type="zinc finger region" description="C2H2-type 6" evidence="1">
    <location>
        <begin position="374"/>
        <end position="396"/>
    </location>
</feature>
<feature type="zinc finger region" description="C2H2-type 7" evidence="1">
    <location>
        <begin position="402"/>
        <end position="424"/>
    </location>
</feature>
<feature type="zinc finger region" description="C2H2-type 8" evidence="1">
    <location>
        <begin position="430"/>
        <end position="452"/>
    </location>
</feature>
<feature type="zinc finger region" description="C2H2-type 9" evidence="1">
    <location>
        <begin position="458"/>
        <end position="480"/>
    </location>
</feature>
<feature type="zinc finger region" description="C2H2-type 10" evidence="1">
    <location>
        <begin position="486"/>
        <end position="508"/>
    </location>
</feature>
<feature type="zinc finger region" description="C2H2-type 11; degenerate" evidence="1">
    <location>
        <begin position="514"/>
        <end position="536"/>
    </location>
</feature>
<feature type="zinc finger region" description="C2H2-type 12" evidence="1">
    <location>
        <begin position="542"/>
        <end position="564"/>
    </location>
</feature>
<feature type="zinc finger region" description="C2H2-type 13; degenerate" evidence="1">
    <location>
        <begin position="570"/>
        <end position="592"/>
    </location>
</feature>
<feature type="region of interest" description="Disordered" evidence="3">
    <location>
        <begin position="121"/>
        <end position="181"/>
    </location>
</feature>
<feature type="region of interest" description="Disordered" evidence="3">
    <location>
        <begin position="583"/>
        <end position="603"/>
    </location>
</feature>
<feature type="compositionally biased region" description="Basic residues" evidence="3">
    <location>
        <begin position="583"/>
        <end position="593"/>
    </location>
</feature>
<feature type="sequence variant" id="VAR_024198" description="In dbSNP:rs1536690.">
    <original>P</original>
    <variation>L</variation>
    <location>
        <position position="72"/>
    </location>
</feature>
<feature type="sequence variant" id="VAR_059065" description="In dbSNP:rs35177967.">
    <original>E</original>
    <variation>K</variation>
    <location>
        <position position="78"/>
    </location>
</feature>
<feature type="sequence variant" id="VAR_059066" description="In dbSNP:rs34433105.">
    <original>S</original>
    <variation>L</variation>
    <location>
        <position position="152"/>
    </location>
</feature>
<feature type="sequence variant" id="VAR_024199" description="In dbSNP:rs12236219.">
    <original>R</original>
    <variation>C</variation>
    <location>
        <position position="381"/>
    </location>
</feature>
<feature type="sequence variant" id="VAR_059067" description="In dbSNP:rs12350212." evidence="4">
    <original>Q</original>
    <variation>H</variation>
    <location>
        <position position="596"/>
    </location>
</feature>
<feature type="sequence conflict" description="In Ref. 5; AAA70188." evidence="5" ref="5">
    <original>FQPSFPHLV</original>
    <variation>IPAKFSPPG</variation>
    <location>
        <begin position="91"/>
        <end position="99"/>
    </location>
</feature>
<feature type="sequence conflict" description="In Ref. 5; AAA70188." evidence="5" ref="5">
    <original>SLS</original>
    <variation>PSP</variation>
    <location>
        <begin position="276"/>
        <end position="278"/>
    </location>
</feature>
<feature type="sequence conflict" description="In Ref. 1; BAF82431." evidence="5" ref="1">
    <original>E</original>
    <variation>D</variation>
    <location>
        <position position="343"/>
    </location>
</feature>
<feature type="sequence conflict" description="In Ref. 5; AAA70188." evidence="5" ref="5">
    <original>PECGRGFC</original>
    <variation>LSVGEAL</variation>
    <location>
        <begin position="349"/>
        <end position="356"/>
    </location>
</feature>
<feature type="sequence conflict" description="In Ref. 5; AAA70188." evidence="5" ref="5">
    <original>C</original>
    <variation>S</variation>
    <location>
        <position position="376"/>
    </location>
</feature>
<feature type="sequence conflict" description="In Ref. 5; AAA70188." evidence="5" ref="5">
    <original>S</original>
    <variation>T</variation>
    <location>
        <position position="382"/>
    </location>
</feature>
<feature type="sequence conflict" description="In Ref. 5; AAA70188." evidence="5" ref="5">
    <original>KV</original>
    <variation>NG</variation>
    <location>
        <begin position="470"/>
        <end position="471"/>
    </location>
</feature>
<sequence>MSPGLLTTRKEALMAFRDVAVAFTQKEWKLLSSAQRTLYREVMLENYSHLVSLGIAFSKPKLIEQLEQGDEPWREENEHLLDLCPEPRTEFQPSFPHLVAFSSSQLLRQYALSGHPTQIFPSSSAGGDFQLEAPRCSSEKGESGETEGPDSSLRKRPSRISRTFFSPHQGDPVEWVEGNREGGTDLRLAQRMSLGGSDTMLKGADTSESGAVIRGNYRLGLSKKSSLFSHQKHHVCPECGRGFCQRSDLIKHQRTHTGEKPYLCPECGRRFSQKASLSIHQRKHSGEKPYVCRECGRHFRYTSSLTNHKRIHSGERPFVCQECGRGFRQKIALLLHQRTHLEEKPFVCPECGRGFCQKASLLQHQSSHTGERPFLCLECGRSFRQQSLLLSHQVTHSGEKPYVCAECGHSFRQKVTLIRHQRTHTGEKPYLCPQCGRGFSQKVTLIGHQRTHTGEKPYLCPDCGRGFGQKVTLIRHQRTHTGEKPYLCPKCGRAFGFKSLLTRHQRTHSEEELYVDRVCGQGLGQKSHLISDQRTHSGEKPCICDECGRGFGFKSALIRHQRTHSGEKPYVCRECGRGFSQKSHLHRHRRTKSGHQLLPQEVF</sequence>
<comment type="function">
    <text>May be involved in transcriptional regulation.</text>
</comment>
<comment type="interaction">
    <interactant intactId="EBI-10234472">
        <id>Q14929</id>
    </interactant>
    <interactant intactId="EBI-10311131">
        <id>Q9NP86</id>
        <label>CABP5</label>
    </interactant>
    <organismsDiffer>false</organismsDiffer>
    <experiments>3</experiments>
</comment>
<comment type="interaction">
    <interactant intactId="EBI-10234472">
        <id>Q14929</id>
    </interactant>
    <interactant intactId="EBI-748961">
        <id>O95273</id>
        <label>CCNDBP1</label>
    </interactant>
    <organismsDiffer>false</organismsDiffer>
    <experiments>3</experiments>
</comment>
<comment type="interaction">
    <interactant intactId="EBI-10234472">
        <id>Q14929</id>
    </interactant>
    <interactant intactId="EBI-739624">
        <id>Q8NHQ1</id>
        <label>CEP70</label>
    </interactant>
    <organismsDiffer>false</organismsDiffer>
    <experiments>3</experiments>
</comment>
<comment type="interaction">
    <interactant intactId="EBI-10234472">
        <id>Q14929</id>
    </interactant>
    <interactant intactId="EBI-12012928">
        <id>P60371</id>
        <label>KRTAP10-6</label>
    </interactant>
    <organismsDiffer>false</organismsDiffer>
    <experiments>3</experiments>
</comment>
<comment type="interaction">
    <interactant intactId="EBI-10234472">
        <id>Q14929</id>
    </interactant>
    <interactant intactId="EBI-10172290">
        <id>P60409</id>
        <label>KRTAP10-7</label>
    </interactant>
    <organismsDiffer>false</organismsDiffer>
    <experiments>3</experiments>
</comment>
<comment type="subcellular location">
    <subcellularLocation>
        <location evidence="5">Nucleus</location>
    </subcellularLocation>
</comment>
<comment type="tissue specificity">
    <text>Highly expressed in kidney, weakly expressed in heart, liver, spleen, and small intestine. Not expressed in adult brain or spinal cord.</text>
</comment>
<comment type="similarity">
    <text evidence="5">Belongs to the krueppel C2H2-type zinc-finger protein family.</text>
</comment>
<comment type="sequence caution" evidence="5">
    <conflict type="erroneous initiation">
        <sequence resource="EMBL-CDS" id="AAH47702"/>
    </conflict>
</comment>
<comment type="sequence caution" evidence="5">
    <conflict type="erroneous initiation">
        <sequence resource="EMBL-CDS" id="BAF82431"/>
    </conflict>
</comment>
<evidence type="ECO:0000255" key="1">
    <source>
        <dbReference type="PROSITE-ProRule" id="PRU00042"/>
    </source>
</evidence>
<evidence type="ECO:0000255" key="2">
    <source>
        <dbReference type="PROSITE-ProRule" id="PRU00119"/>
    </source>
</evidence>
<evidence type="ECO:0000256" key="3">
    <source>
        <dbReference type="SAM" id="MobiDB-lite"/>
    </source>
</evidence>
<evidence type="ECO:0000269" key="4">
    <source>
    </source>
</evidence>
<evidence type="ECO:0000305" key="5"/>
<name>ZN169_HUMAN</name>
<protein>
    <recommendedName>
        <fullName>Zinc finger protein 169</fullName>
    </recommendedName>
</protein>
<keyword id="KW-0238">DNA-binding</keyword>
<keyword id="KW-0479">Metal-binding</keyword>
<keyword id="KW-0539">Nucleus</keyword>
<keyword id="KW-1267">Proteomics identification</keyword>
<keyword id="KW-1185">Reference proteome</keyword>
<keyword id="KW-0677">Repeat</keyword>
<keyword id="KW-0804">Transcription</keyword>
<keyword id="KW-0805">Transcription regulation</keyword>
<keyword id="KW-0862">Zinc</keyword>
<keyword id="KW-0863">Zinc-finger</keyword>
<organism>
    <name type="scientific">Homo sapiens</name>
    <name type="common">Human</name>
    <dbReference type="NCBI Taxonomy" id="9606"/>
    <lineage>
        <taxon>Eukaryota</taxon>
        <taxon>Metazoa</taxon>
        <taxon>Chordata</taxon>
        <taxon>Craniata</taxon>
        <taxon>Vertebrata</taxon>
        <taxon>Euteleostomi</taxon>
        <taxon>Mammalia</taxon>
        <taxon>Eutheria</taxon>
        <taxon>Euarchontoglires</taxon>
        <taxon>Primates</taxon>
        <taxon>Haplorrhini</taxon>
        <taxon>Catarrhini</taxon>
        <taxon>Hominidae</taxon>
        <taxon>Homo</taxon>
    </lineage>
</organism>
<reference key="1">
    <citation type="journal article" date="2004" name="Nat. Genet.">
        <title>Complete sequencing and characterization of 21,243 full-length human cDNAs.</title>
        <authorList>
            <person name="Ota T."/>
            <person name="Suzuki Y."/>
            <person name="Nishikawa T."/>
            <person name="Otsuki T."/>
            <person name="Sugiyama T."/>
            <person name="Irie R."/>
            <person name="Wakamatsu A."/>
            <person name="Hayashi K."/>
            <person name="Sato H."/>
            <person name="Nagai K."/>
            <person name="Kimura K."/>
            <person name="Makita H."/>
            <person name="Sekine M."/>
            <person name="Obayashi M."/>
            <person name="Nishi T."/>
            <person name="Shibahara T."/>
            <person name="Tanaka T."/>
            <person name="Ishii S."/>
            <person name="Yamamoto J."/>
            <person name="Saito K."/>
            <person name="Kawai Y."/>
            <person name="Isono Y."/>
            <person name="Nakamura Y."/>
            <person name="Nagahari K."/>
            <person name="Murakami K."/>
            <person name="Yasuda T."/>
            <person name="Iwayanagi T."/>
            <person name="Wagatsuma M."/>
            <person name="Shiratori A."/>
            <person name="Sudo H."/>
            <person name="Hosoiri T."/>
            <person name="Kaku Y."/>
            <person name="Kodaira H."/>
            <person name="Kondo H."/>
            <person name="Sugawara M."/>
            <person name="Takahashi M."/>
            <person name="Kanda K."/>
            <person name="Yokoi T."/>
            <person name="Furuya T."/>
            <person name="Kikkawa E."/>
            <person name="Omura Y."/>
            <person name="Abe K."/>
            <person name="Kamihara K."/>
            <person name="Katsuta N."/>
            <person name="Sato K."/>
            <person name="Tanikawa M."/>
            <person name="Yamazaki M."/>
            <person name="Ninomiya K."/>
            <person name="Ishibashi T."/>
            <person name="Yamashita H."/>
            <person name="Murakawa K."/>
            <person name="Fujimori K."/>
            <person name="Tanai H."/>
            <person name="Kimata M."/>
            <person name="Watanabe M."/>
            <person name="Hiraoka S."/>
            <person name="Chiba Y."/>
            <person name="Ishida S."/>
            <person name="Ono Y."/>
            <person name="Takiguchi S."/>
            <person name="Watanabe S."/>
            <person name="Yosida M."/>
            <person name="Hotuta T."/>
            <person name="Kusano J."/>
            <person name="Kanehori K."/>
            <person name="Takahashi-Fujii A."/>
            <person name="Hara H."/>
            <person name="Tanase T.-O."/>
            <person name="Nomura Y."/>
            <person name="Togiya S."/>
            <person name="Komai F."/>
            <person name="Hara R."/>
            <person name="Takeuchi K."/>
            <person name="Arita M."/>
            <person name="Imose N."/>
            <person name="Musashino K."/>
            <person name="Yuuki H."/>
            <person name="Oshima A."/>
            <person name="Sasaki N."/>
            <person name="Aotsuka S."/>
            <person name="Yoshikawa Y."/>
            <person name="Matsunawa H."/>
            <person name="Ichihara T."/>
            <person name="Shiohata N."/>
            <person name="Sano S."/>
            <person name="Moriya S."/>
            <person name="Momiyama H."/>
            <person name="Satoh N."/>
            <person name="Takami S."/>
            <person name="Terashima Y."/>
            <person name="Suzuki O."/>
            <person name="Nakagawa S."/>
            <person name="Senoh A."/>
            <person name="Mizoguchi H."/>
            <person name="Goto Y."/>
            <person name="Shimizu F."/>
            <person name="Wakebe H."/>
            <person name="Hishigaki H."/>
            <person name="Watanabe T."/>
            <person name="Sugiyama A."/>
            <person name="Takemoto M."/>
            <person name="Kawakami B."/>
            <person name="Yamazaki M."/>
            <person name="Watanabe K."/>
            <person name="Kumagai A."/>
            <person name="Itakura S."/>
            <person name="Fukuzumi Y."/>
            <person name="Fujimori Y."/>
            <person name="Komiyama M."/>
            <person name="Tashiro H."/>
            <person name="Tanigami A."/>
            <person name="Fujiwara T."/>
            <person name="Ono T."/>
            <person name="Yamada K."/>
            <person name="Fujii Y."/>
            <person name="Ozaki K."/>
            <person name="Hirao M."/>
            <person name="Ohmori Y."/>
            <person name="Kawabata A."/>
            <person name="Hikiji T."/>
            <person name="Kobatake N."/>
            <person name="Inagaki H."/>
            <person name="Ikema Y."/>
            <person name="Okamoto S."/>
            <person name="Okitani R."/>
            <person name="Kawakami T."/>
            <person name="Noguchi S."/>
            <person name="Itoh T."/>
            <person name="Shigeta K."/>
            <person name="Senba T."/>
            <person name="Matsumura K."/>
            <person name="Nakajima Y."/>
            <person name="Mizuno T."/>
            <person name="Morinaga M."/>
            <person name="Sasaki M."/>
            <person name="Togashi T."/>
            <person name="Oyama M."/>
            <person name="Hata H."/>
            <person name="Watanabe M."/>
            <person name="Komatsu T."/>
            <person name="Mizushima-Sugano J."/>
            <person name="Satoh T."/>
            <person name="Shirai Y."/>
            <person name="Takahashi Y."/>
            <person name="Nakagawa K."/>
            <person name="Okumura K."/>
            <person name="Nagase T."/>
            <person name="Nomura N."/>
            <person name="Kikuchi H."/>
            <person name="Masuho Y."/>
            <person name="Yamashita R."/>
            <person name="Nakai K."/>
            <person name="Yada T."/>
            <person name="Nakamura Y."/>
            <person name="Ohara O."/>
            <person name="Isogai T."/>
            <person name="Sugano S."/>
        </authorList>
    </citation>
    <scope>NUCLEOTIDE SEQUENCE [LARGE SCALE MRNA]</scope>
    <source>
        <tissue>Brain</tissue>
    </source>
</reference>
<reference key="2">
    <citation type="journal article" date="2004" name="Nature">
        <title>DNA sequence and analysis of human chromosome 9.</title>
        <authorList>
            <person name="Humphray S.J."/>
            <person name="Oliver K."/>
            <person name="Hunt A.R."/>
            <person name="Plumb R.W."/>
            <person name="Loveland J.E."/>
            <person name="Howe K.L."/>
            <person name="Andrews T.D."/>
            <person name="Searle S."/>
            <person name="Hunt S.E."/>
            <person name="Scott C.E."/>
            <person name="Jones M.C."/>
            <person name="Ainscough R."/>
            <person name="Almeida J.P."/>
            <person name="Ambrose K.D."/>
            <person name="Ashwell R.I.S."/>
            <person name="Babbage A.K."/>
            <person name="Babbage S."/>
            <person name="Bagguley C.L."/>
            <person name="Bailey J."/>
            <person name="Banerjee R."/>
            <person name="Barker D.J."/>
            <person name="Barlow K.F."/>
            <person name="Bates K."/>
            <person name="Beasley H."/>
            <person name="Beasley O."/>
            <person name="Bird C.P."/>
            <person name="Bray-Allen S."/>
            <person name="Brown A.J."/>
            <person name="Brown J.Y."/>
            <person name="Burford D."/>
            <person name="Burrill W."/>
            <person name="Burton J."/>
            <person name="Carder C."/>
            <person name="Carter N.P."/>
            <person name="Chapman J.C."/>
            <person name="Chen Y."/>
            <person name="Clarke G."/>
            <person name="Clark S.Y."/>
            <person name="Clee C.M."/>
            <person name="Clegg S."/>
            <person name="Collier R.E."/>
            <person name="Corby N."/>
            <person name="Crosier M."/>
            <person name="Cummings A.T."/>
            <person name="Davies J."/>
            <person name="Dhami P."/>
            <person name="Dunn M."/>
            <person name="Dutta I."/>
            <person name="Dyer L.W."/>
            <person name="Earthrowl M.E."/>
            <person name="Faulkner L."/>
            <person name="Fleming C.J."/>
            <person name="Frankish A."/>
            <person name="Frankland J.A."/>
            <person name="French L."/>
            <person name="Fricker D.G."/>
            <person name="Garner P."/>
            <person name="Garnett J."/>
            <person name="Ghori J."/>
            <person name="Gilbert J.G.R."/>
            <person name="Glison C."/>
            <person name="Grafham D.V."/>
            <person name="Gribble S."/>
            <person name="Griffiths C."/>
            <person name="Griffiths-Jones S."/>
            <person name="Grocock R."/>
            <person name="Guy J."/>
            <person name="Hall R.E."/>
            <person name="Hammond S."/>
            <person name="Harley J.L."/>
            <person name="Harrison E.S.I."/>
            <person name="Hart E.A."/>
            <person name="Heath P.D."/>
            <person name="Henderson C.D."/>
            <person name="Hopkins B.L."/>
            <person name="Howard P.J."/>
            <person name="Howden P.J."/>
            <person name="Huckle E."/>
            <person name="Johnson C."/>
            <person name="Johnson D."/>
            <person name="Joy A.A."/>
            <person name="Kay M."/>
            <person name="Keenan S."/>
            <person name="Kershaw J.K."/>
            <person name="Kimberley A.M."/>
            <person name="King A."/>
            <person name="Knights A."/>
            <person name="Laird G.K."/>
            <person name="Langford C."/>
            <person name="Lawlor S."/>
            <person name="Leongamornlert D.A."/>
            <person name="Leversha M."/>
            <person name="Lloyd C."/>
            <person name="Lloyd D.M."/>
            <person name="Lovell J."/>
            <person name="Martin S."/>
            <person name="Mashreghi-Mohammadi M."/>
            <person name="Matthews L."/>
            <person name="McLaren S."/>
            <person name="McLay K.E."/>
            <person name="McMurray A."/>
            <person name="Milne S."/>
            <person name="Nickerson T."/>
            <person name="Nisbett J."/>
            <person name="Nordsiek G."/>
            <person name="Pearce A.V."/>
            <person name="Peck A.I."/>
            <person name="Porter K.M."/>
            <person name="Pandian R."/>
            <person name="Pelan S."/>
            <person name="Phillimore B."/>
            <person name="Povey S."/>
            <person name="Ramsey Y."/>
            <person name="Rand V."/>
            <person name="Scharfe M."/>
            <person name="Sehra H.K."/>
            <person name="Shownkeen R."/>
            <person name="Sims S.K."/>
            <person name="Skuce C.D."/>
            <person name="Smith M."/>
            <person name="Steward C.A."/>
            <person name="Swarbreck D."/>
            <person name="Sycamore N."/>
            <person name="Tester J."/>
            <person name="Thorpe A."/>
            <person name="Tracey A."/>
            <person name="Tromans A."/>
            <person name="Thomas D.W."/>
            <person name="Wall M."/>
            <person name="Wallis J.M."/>
            <person name="West A.P."/>
            <person name="Whitehead S.L."/>
            <person name="Willey D.L."/>
            <person name="Williams S.A."/>
            <person name="Wilming L."/>
            <person name="Wray P.W."/>
            <person name="Young L."/>
            <person name="Ashurst J.L."/>
            <person name="Coulson A."/>
            <person name="Blocker H."/>
            <person name="Durbin R.M."/>
            <person name="Sulston J.E."/>
            <person name="Hubbard T."/>
            <person name="Jackson M.J."/>
            <person name="Bentley D.R."/>
            <person name="Beck S."/>
            <person name="Rogers J."/>
            <person name="Dunham I."/>
        </authorList>
    </citation>
    <scope>NUCLEOTIDE SEQUENCE [LARGE SCALE GENOMIC DNA]</scope>
</reference>
<reference key="3">
    <citation type="submission" date="2005-07" db="EMBL/GenBank/DDBJ databases">
        <authorList>
            <person name="Mural R.J."/>
            <person name="Istrail S."/>
            <person name="Sutton G.G."/>
            <person name="Florea L."/>
            <person name="Halpern A.L."/>
            <person name="Mobarry C.M."/>
            <person name="Lippert R."/>
            <person name="Walenz B."/>
            <person name="Shatkay H."/>
            <person name="Dew I."/>
            <person name="Miller J.R."/>
            <person name="Flanigan M.J."/>
            <person name="Edwards N.J."/>
            <person name="Bolanos R."/>
            <person name="Fasulo D."/>
            <person name="Halldorsson B.V."/>
            <person name="Hannenhalli S."/>
            <person name="Turner R."/>
            <person name="Yooseph S."/>
            <person name="Lu F."/>
            <person name="Nusskern D.R."/>
            <person name="Shue B.C."/>
            <person name="Zheng X.H."/>
            <person name="Zhong F."/>
            <person name="Delcher A.L."/>
            <person name="Huson D.H."/>
            <person name="Kravitz S.A."/>
            <person name="Mouchard L."/>
            <person name="Reinert K."/>
            <person name="Remington K.A."/>
            <person name="Clark A.G."/>
            <person name="Waterman M.S."/>
            <person name="Eichler E.E."/>
            <person name="Adams M.D."/>
            <person name="Hunkapiller M.W."/>
            <person name="Myers E.W."/>
            <person name="Venter J.C."/>
        </authorList>
    </citation>
    <scope>NUCLEOTIDE SEQUENCE [LARGE SCALE GENOMIC DNA]</scope>
</reference>
<reference key="4">
    <citation type="journal article" date="2004" name="Genome Res.">
        <title>The status, quality, and expansion of the NIH full-length cDNA project: the Mammalian Gene Collection (MGC).</title>
        <authorList>
            <consortium name="The MGC Project Team"/>
        </authorList>
    </citation>
    <scope>NUCLEOTIDE SEQUENCE [LARGE SCALE MRNA]</scope>
    <source>
        <tissue>Testis</tissue>
    </source>
</reference>
<reference key="5">
    <citation type="journal article" date="1997" name="Genes Chromosomes Cancer">
        <title>Characterization of a YAC contig containing the NBCCS locus and a novel Kruppel-type zinc finger sequence on chromosome segment 9q22.3.</title>
        <authorList>
            <person name="Chidambaram A."/>
            <person name="Gailani M."/>
            <person name="Gerrard B."/>
            <person name="Stewart C."/>
            <person name="Goldstein A."/>
            <person name="Chumakov I."/>
            <person name="Bale A.E."/>
            <person name="Dean M."/>
        </authorList>
    </citation>
    <scope>NUCLEOTIDE SEQUENCE [GENOMIC DNA] OF 91-603</scope>
    <scope>VARIANT HIS-596</scope>
</reference>
<gene>
    <name type="primary">ZNF169</name>
</gene>
<proteinExistence type="evidence at protein level"/>
<accession>Q14929</accession>
<accession>A2AGP5</accession>
<accession>A8K127</accession>
<accession>Q6PI28</accession>
<dbReference type="EMBL" id="AK289742">
    <property type="protein sequence ID" value="BAF82431.1"/>
    <property type="status" value="ALT_INIT"/>
    <property type="molecule type" value="mRNA"/>
</dbReference>
<dbReference type="EMBL" id="AL691447">
    <property type="status" value="NOT_ANNOTATED_CDS"/>
    <property type="molecule type" value="Genomic_DNA"/>
</dbReference>
<dbReference type="EMBL" id="CH471089">
    <property type="protein sequence ID" value="EAW62879.1"/>
    <property type="molecule type" value="Genomic_DNA"/>
</dbReference>
<dbReference type="EMBL" id="BC047702">
    <property type="protein sequence ID" value="AAH47702.1"/>
    <property type="status" value="ALT_INIT"/>
    <property type="molecule type" value="mRNA"/>
</dbReference>
<dbReference type="EMBL" id="U28251">
    <property type="protein sequence ID" value="AAA70188.1"/>
    <property type="molecule type" value="Genomic_DNA"/>
</dbReference>
<dbReference type="CCDS" id="CCDS6709.2"/>
<dbReference type="RefSeq" id="NP_919301.2">
    <property type="nucleotide sequence ID" value="NM_194320.4"/>
</dbReference>
<dbReference type="RefSeq" id="XP_016869853.1">
    <property type="nucleotide sequence ID" value="XM_017014364.1"/>
</dbReference>
<dbReference type="RefSeq" id="XP_024303200.1">
    <property type="nucleotide sequence ID" value="XM_024447432.2"/>
</dbReference>
<dbReference type="SMR" id="Q14929"/>
<dbReference type="BioGRID" id="127990">
    <property type="interactions" value="53"/>
</dbReference>
<dbReference type="FunCoup" id="Q14929">
    <property type="interactions" value="72"/>
</dbReference>
<dbReference type="IntAct" id="Q14929">
    <property type="interactions" value="50"/>
</dbReference>
<dbReference type="STRING" id="9606.ENSP00000378792"/>
<dbReference type="GlyGen" id="Q14929">
    <property type="glycosylation" value="1 site, 1 O-linked glycan (1 site)"/>
</dbReference>
<dbReference type="iPTMnet" id="Q14929"/>
<dbReference type="PhosphoSitePlus" id="Q14929"/>
<dbReference type="BioMuta" id="ZNF169"/>
<dbReference type="DMDM" id="259016472"/>
<dbReference type="MassIVE" id="Q14929"/>
<dbReference type="PaxDb" id="9606-ENSP00000378792"/>
<dbReference type="PeptideAtlas" id="Q14929"/>
<dbReference type="ProteomicsDB" id="60222"/>
<dbReference type="Antibodypedia" id="28458">
    <property type="antibodies" value="154 antibodies from 27 providers"/>
</dbReference>
<dbReference type="DNASU" id="169841"/>
<dbReference type="Ensembl" id="ENST00000395395.7">
    <property type="protein sequence ID" value="ENSP00000378792.2"/>
    <property type="gene ID" value="ENSG00000175787.18"/>
</dbReference>
<dbReference type="GeneID" id="169841"/>
<dbReference type="KEGG" id="hsa:169841"/>
<dbReference type="MANE-Select" id="ENST00000395395.7">
    <property type="protein sequence ID" value="ENSP00000378792.2"/>
    <property type="RefSeq nucleotide sequence ID" value="NM_194320.4"/>
    <property type="RefSeq protein sequence ID" value="NP_919301.2"/>
</dbReference>
<dbReference type="UCSC" id="uc004aum.2">
    <property type="organism name" value="human"/>
</dbReference>
<dbReference type="AGR" id="HGNC:12957"/>
<dbReference type="CTD" id="169841"/>
<dbReference type="DisGeNET" id="169841"/>
<dbReference type="GeneCards" id="ZNF169"/>
<dbReference type="HGNC" id="HGNC:12957">
    <property type="gene designation" value="ZNF169"/>
</dbReference>
<dbReference type="HPA" id="ENSG00000175787">
    <property type="expression patterns" value="Low tissue specificity"/>
</dbReference>
<dbReference type="MIM" id="603404">
    <property type="type" value="gene"/>
</dbReference>
<dbReference type="neXtProt" id="NX_Q14929"/>
<dbReference type="OpenTargets" id="ENSG00000175787"/>
<dbReference type="PharmGKB" id="PA37539"/>
<dbReference type="VEuPathDB" id="HostDB:ENSG00000175787"/>
<dbReference type="eggNOG" id="KOG1721">
    <property type="taxonomic scope" value="Eukaryota"/>
</dbReference>
<dbReference type="GeneTree" id="ENSGT00940000163169"/>
<dbReference type="HOGENOM" id="CLU_002678_44_5_1"/>
<dbReference type="InParanoid" id="Q14929"/>
<dbReference type="OMA" id="HRHKRTK"/>
<dbReference type="OrthoDB" id="6591996at2759"/>
<dbReference type="PAN-GO" id="Q14929">
    <property type="GO annotations" value="3 GO annotations based on evolutionary models"/>
</dbReference>
<dbReference type="PhylomeDB" id="Q14929"/>
<dbReference type="TreeFam" id="TF338096"/>
<dbReference type="PathwayCommons" id="Q14929"/>
<dbReference type="Reactome" id="R-HSA-212436">
    <property type="pathway name" value="Generic Transcription Pathway"/>
</dbReference>
<dbReference type="SignaLink" id="Q14929"/>
<dbReference type="BioGRID-ORCS" id="169841">
    <property type="hits" value="36 hits in 1172 CRISPR screens"/>
</dbReference>
<dbReference type="ChiTaRS" id="ZNF169">
    <property type="organism name" value="human"/>
</dbReference>
<dbReference type="GenomeRNAi" id="169841"/>
<dbReference type="Pharos" id="Q14929">
    <property type="development level" value="Tdark"/>
</dbReference>
<dbReference type="PRO" id="PR:Q14929"/>
<dbReference type="Proteomes" id="UP000005640">
    <property type="component" value="Chromosome 9"/>
</dbReference>
<dbReference type="RNAct" id="Q14929">
    <property type="molecule type" value="protein"/>
</dbReference>
<dbReference type="Bgee" id="ENSG00000175787">
    <property type="expression patterns" value="Expressed in parotid gland and 155 other cell types or tissues"/>
</dbReference>
<dbReference type="ExpressionAtlas" id="Q14929">
    <property type="expression patterns" value="baseline and differential"/>
</dbReference>
<dbReference type="GO" id="GO:0005634">
    <property type="term" value="C:nucleus"/>
    <property type="evidence" value="ECO:0000318"/>
    <property type="project" value="GO_Central"/>
</dbReference>
<dbReference type="GO" id="GO:0000981">
    <property type="term" value="F:DNA-binding transcription factor activity, RNA polymerase II-specific"/>
    <property type="evidence" value="ECO:0000318"/>
    <property type="project" value="GO_Central"/>
</dbReference>
<dbReference type="GO" id="GO:0000977">
    <property type="term" value="F:RNA polymerase II transcription regulatory region sequence-specific DNA binding"/>
    <property type="evidence" value="ECO:0000318"/>
    <property type="project" value="GO_Central"/>
</dbReference>
<dbReference type="GO" id="GO:0008270">
    <property type="term" value="F:zinc ion binding"/>
    <property type="evidence" value="ECO:0007669"/>
    <property type="project" value="UniProtKB-KW"/>
</dbReference>
<dbReference type="GO" id="GO:0006357">
    <property type="term" value="P:regulation of transcription by RNA polymerase II"/>
    <property type="evidence" value="ECO:0000318"/>
    <property type="project" value="GO_Central"/>
</dbReference>
<dbReference type="CDD" id="cd07765">
    <property type="entry name" value="KRAB_A-box"/>
    <property type="match status" value="1"/>
</dbReference>
<dbReference type="FunFam" id="3.30.160.60:FF:003095">
    <property type="match status" value="1"/>
</dbReference>
<dbReference type="FunFam" id="3.30.160.60:FF:001576">
    <property type="entry name" value="HKR1, GLI-Kruppel zinc finger family member"/>
    <property type="match status" value="1"/>
</dbReference>
<dbReference type="FunFam" id="3.30.160.60:FF:000478">
    <property type="entry name" value="Zinc finger protein 133"/>
    <property type="match status" value="1"/>
</dbReference>
<dbReference type="FunFam" id="3.30.160.60:FF:001664">
    <property type="entry name" value="Zinc finger protein 133"/>
    <property type="match status" value="1"/>
</dbReference>
<dbReference type="FunFam" id="3.30.160.60:FF:001623">
    <property type="entry name" value="Zinc finger protein 169"/>
    <property type="match status" value="1"/>
</dbReference>
<dbReference type="FunFam" id="3.30.160.60:FF:002178">
    <property type="entry name" value="Zinc finger protein 169"/>
    <property type="match status" value="1"/>
</dbReference>
<dbReference type="FunFam" id="3.30.160.60:FF:000704">
    <property type="entry name" value="zinc finger protein 169 isoform X2"/>
    <property type="match status" value="4"/>
</dbReference>
<dbReference type="FunFam" id="3.30.160.60:FF:002343">
    <property type="entry name" value="Zinc finger protein 33A"/>
    <property type="match status" value="2"/>
</dbReference>
<dbReference type="Gene3D" id="6.10.140.140">
    <property type="match status" value="1"/>
</dbReference>
<dbReference type="Gene3D" id="3.30.160.60">
    <property type="entry name" value="Classic Zinc Finger"/>
    <property type="match status" value="13"/>
</dbReference>
<dbReference type="InterPro" id="IPR050752">
    <property type="entry name" value="C2H2-ZF_domain"/>
</dbReference>
<dbReference type="InterPro" id="IPR001909">
    <property type="entry name" value="KRAB"/>
</dbReference>
<dbReference type="InterPro" id="IPR036051">
    <property type="entry name" value="KRAB_dom_sf"/>
</dbReference>
<dbReference type="InterPro" id="IPR036236">
    <property type="entry name" value="Znf_C2H2_sf"/>
</dbReference>
<dbReference type="InterPro" id="IPR013087">
    <property type="entry name" value="Znf_C2H2_type"/>
</dbReference>
<dbReference type="PANTHER" id="PTHR24384">
    <property type="entry name" value="FINGER PUTATIVE TRANSCRIPTION FACTOR FAMILY-RELATED"/>
    <property type="match status" value="1"/>
</dbReference>
<dbReference type="PANTHER" id="PTHR24384:SF246">
    <property type="entry name" value="GENE, 19965-RELATED"/>
    <property type="match status" value="1"/>
</dbReference>
<dbReference type="Pfam" id="PF01352">
    <property type="entry name" value="KRAB"/>
    <property type="match status" value="1"/>
</dbReference>
<dbReference type="Pfam" id="PF00096">
    <property type="entry name" value="zf-C2H2"/>
    <property type="match status" value="12"/>
</dbReference>
<dbReference type="SMART" id="SM00349">
    <property type="entry name" value="KRAB"/>
    <property type="match status" value="1"/>
</dbReference>
<dbReference type="SMART" id="SM00355">
    <property type="entry name" value="ZnF_C2H2"/>
    <property type="match status" value="12"/>
</dbReference>
<dbReference type="SUPFAM" id="SSF57667">
    <property type="entry name" value="beta-beta-alpha zinc fingers"/>
    <property type="match status" value="7"/>
</dbReference>
<dbReference type="SUPFAM" id="SSF109640">
    <property type="entry name" value="KRAB domain (Kruppel-associated box)"/>
    <property type="match status" value="1"/>
</dbReference>
<dbReference type="PROSITE" id="PS50805">
    <property type="entry name" value="KRAB"/>
    <property type="match status" value="1"/>
</dbReference>
<dbReference type="PROSITE" id="PS00028">
    <property type="entry name" value="ZINC_FINGER_C2H2_1"/>
    <property type="match status" value="11"/>
</dbReference>
<dbReference type="PROSITE" id="PS50157">
    <property type="entry name" value="ZINC_FINGER_C2H2_2"/>
    <property type="match status" value="13"/>
</dbReference>